<accession>Q1D1F0</accession>
<comment type="function">
    <text evidence="1">Catalyzes the decarboxylation of four acetate groups of uroporphyrinogen-III to yield coproporphyrinogen-III.</text>
</comment>
<comment type="catalytic activity">
    <reaction evidence="1">
        <text>uroporphyrinogen III + 4 H(+) = coproporphyrinogen III + 4 CO2</text>
        <dbReference type="Rhea" id="RHEA:19865"/>
        <dbReference type="ChEBI" id="CHEBI:15378"/>
        <dbReference type="ChEBI" id="CHEBI:16526"/>
        <dbReference type="ChEBI" id="CHEBI:57308"/>
        <dbReference type="ChEBI" id="CHEBI:57309"/>
        <dbReference type="EC" id="4.1.1.37"/>
    </reaction>
</comment>
<comment type="pathway">
    <text evidence="1">Porphyrin-containing compound metabolism; protoporphyrin-IX biosynthesis; coproporphyrinogen-III from 5-aminolevulinate: step 4/4.</text>
</comment>
<comment type="subunit">
    <text evidence="1">Homodimer.</text>
</comment>
<comment type="subcellular location">
    <subcellularLocation>
        <location evidence="1">Cytoplasm</location>
    </subcellularLocation>
</comment>
<comment type="similarity">
    <text evidence="1">Belongs to the uroporphyrinogen decarboxylase family.</text>
</comment>
<organism>
    <name type="scientific">Myxococcus xanthus (strain DK1622)</name>
    <dbReference type="NCBI Taxonomy" id="246197"/>
    <lineage>
        <taxon>Bacteria</taxon>
        <taxon>Pseudomonadati</taxon>
        <taxon>Myxococcota</taxon>
        <taxon>Myxococcia</taxon>
        <taxon>Myxococcales</taxon>
        <taxon>Cystobacterineae</taxon>
        <taxon>Myxococcaceae</taxon>
        <taxon>Myxococcus</taxon>
    </lineage>
</organism>
<gene>
    <name evidence="1" type="primary">hemE</name>
    <name type="ordered locus">MXAN_5373</name>
</gene>
<sequence length="348" mass="37949">MNDRLLRAARRQPTDTTPVWLMRQAGRYLPEYRAIRGNIAFLDLCKHPDLAAEVTVQPVTRLGVDAAIIFSDILIPVEAMGITLELGDKGPHFPDPVRSAADIDKLGVPDPVEGTGFVAEAIRRTRKALNDSVPVIGFAGAPFTLAAYMVEGGGSKSYILIKRLMFEQPELAHRLFGKLTDTLIPYLKMQVEAGASIVQIFDSWGGALSPWDYERFCIPYLKRMVSELKATGVPVIVFGVGMSSHLSLLKSTGADVVGLDWTLPMDEGRKVLGPDVAVQGNLDPLHLFLPREELDGRVKDILRRAGPEGHIFNLGHGILPPTDPDAAKFLVEAVHRHGVALRQGTLGA</sequence>
<feature type="chain" id="PRO_0000325666" description="Uroporphyrinogen decarboxylase">
    <location>
        <begin position="1"/>
        <end position="348"/>
    </location>
</feature>
<feature type="binding site" evidence="1">
    <location>
        <begin position="23"/>
        <end position="27"/>
    </location>
    <ligand>
        <name>substrate</name>
    </ligand>
</feature>
<feature type="binding site" evidence="1">
    <location>
        <position position="72"/>
    </location>
    <ligand>
        <name>substrate</name>
    </ligand>
</feature>
<feature type="binding site" evidence="1">
    <location>
        <position position="148"/>
    </location>
    <ligand>
        <name>substrate</name>
    </ligand>
</feature>
<feature type="binding site" evidence="1">
    <location>
        <position position="203"/>
    </location>
    <ligand>
        <name>substrate</name>
    </ligand>
</feature>
<feature type="binding site" evidence="1">
    <location>
        <position position="316"/>
    </location>
    <ligand>
        <name>substrate</name>
    </ligand>
</feature>
<feature type="site" description="Transition state stabilizer" evidence="1">
    <location>
        <position position="72"/>
    </location>
</feature>
<keyword id="KW-0963">Cytoplasm</keyword>
<keyword id="KW-0210">Decarboxylase</keyword>
<keyword id="KW-0456">Lyase</keyword>
<keyword id="KW-0627">Porphyrin biosynthesis</keyword>
<keyword id="KW-1185">Reference proteome</keyword>
<evidence type="ECO:0000255" key="1">
    <source>
        <dbReference type="HAMAP-Rule" id="MF_00218"/>
    </source>
</evidence>
<name>DCUP_MYXXD</name>
<dbReference type="EC" id="4.1.1.37" evidence="1"/>
<dbReference type="EMBL" id="CP000113">
    <property type="protein sequence ID" value="ABF89775.1"/>
    <property type="molecule type" value="Genomic_DNA"/>
</dbReference>
<dbReference type="RefSeq" id="WP_011555338.1">
    <property type="nucleotide sequence ID" value="NC_008095.1"/>
</dbReference>
<dbReference type="SMR" id="Q1D1F0"/>
<dbReference type="STRING" id="246197.MXAN_5373"/>
<dbReference type="EnsemblBacteria" id="ABF89775">
    <property type="protein sequence ID" value="ABF89775"/>
    <property type="gene ID" value="MXAN_5373"/>
</dbReference>
<dbReference type="GeneID" id="41362641"/>
<dbReference type="KEGG" id="mxa:MXAN_5373"/>
<dbReference type="eggNOG" id="COG0407">
    <property type="taxonomic scope" value="Bacteria"/>
</dbReference>
<dbReference type="HOGENOM" id="CLU_040933_0_0_7"/>
<dbReference type="OrthoDB" id="9806656at2"/>
<dbReference type="UniPathway" id="UPA00251">
    <property type="reaction ID" value="UER00321"/>
</dbReference>
<dbReference type="Proteomes" id="UP000002402">
    <property type="component" value="Chromosome"/>
</dbReference>
<dbReference type="GO" id="GO:0005829">
    <property type="term" value="C:cytosol"/>
    <property type="evidence" value="ECO:0007669"/>
    <property type="project" value="TreeGrafter"/>
</dbReference>
<dbReference type="GO" id="GO:0004853">
    <property type="term" value="F:uroporphyrinogen decarboxylase activity"/>
    <property type="evidence" value="ECO:0007669"/>
    <property type="project" value="UniProtKB-UniRule"/>
</dbReference>
<dbReference type="GO" id="GO:0006782">
    <property type="term" value="P:protoporphyrinogen IX biosynthetic process"/>
    <property type="evidence" value="ECO:0007669"/>
    <property type="project" value="UniProtKB-UniRule"/>
</dbReference>
<dbReference type="CDD" id="cd00717">
    <property type="entry name" value="URO-D"/>
    <property type="match status" value="1"/>
</dbReference>
<dbReference type="FunFam" id="3.20.20.210:FF:000008">
    <property type="entry name" value="Uroporphyrinogen decarboxylase"/>
    <property type="match status" value="1"/>
</dbReference>
<dbReference type="Gene3D" id="3.20.20.210">
    <property type="match status" value="1"/>
</dbReference>
<dbReference type="HAMAP" id="MF_00218">
    <property type="entry name" value="URO_D"/>
    <property type="match status" value="1"/>
</dbReference>
<dbReference type="InterPro" id="IPR038071">
    <property type="entry name" value="UROD/MetE-like_sf"/>
</dbReference>
<dbReference type="InterPro" id="IPR006361">
    <property type="entry name" value="Uroporphyrinogen_deCO2ase_HemE"/>
</dbReference>
<dbReference type="InterPro" id="IPR000257">
    <property type="entry name" value="Uroporphyrinogen_deCOase"/>
</dbReference>
<dbReference type="NCBIfam" id="TIGR01464">
    <property type="entry name" value="hemE"/>
    <property type="match status" value="1"/>
</dbReference>
<dbReference type="PANTHER" id="PTHR21091">
    <property type="entry name" value="METHYLTETRAHYDROFOLATE:HOMOCYSTEINE METHYLTRANSFERASE RELATED"/>
    <property type="match status" value="1"/>
</dbReference>
<dbReference type="PANTHER" id="PTHR21091:SF169">
    <property type="entry name" value="UROPORPHYRINOGEN DECARBOXYLASE"/>
    <property type="match status" value="1"/>
</dbReference>
<dbReference type="Pfam" id="PF01208">
    <property type="entry name" value="URO-D"/>
    <property type="match status" value="1"/>
</dbReference>
<dbReference type="SUPFAM" id="SSF51726">
    <property type="entry name" value="UROD/MetE-like"/>
    <property type="match status" value="1"/>
</dbReference>
<dbReference type="PROSITE" id="PS00906">
    <property type="entry name" value="UROD_1"/>
    <property type="match status" value="1"/>
</dbReference>
<dbReference type="PROSITE" id="PS00907">
    <property type="entry name" value="UROD_2"/>
    <property type="match status" value="1"/>
</dbReference>
<protein>
    <recommendedName>
        <fullName evidence="1">Uroporphyrinogen decarboxylase</fullName>
        <shortName evidence="1">UPD</shortName>
        <shortName evidence="1">URO-D</shortName>
        <ecNumber evidence="1">4.1.1.37</ecNumber>
    </recommendedName>
</protein>
<reference key="1">
    <citation type="journal article" date="2006" name="Proc. Natl. Acad. Sci. U.S.A.">
        <title>Evolution of sensory complexity recorded in a myxobacterial genome.</title>
        <authorList>
            <person name="Goldman B.S."/>
            <person name="Nierman W.C."/>
            <person name="Kaiser D."/>
            <person name="Slater S.C."/>
            <person name="Durkin A.S."/>
            <person name="Eisen J.A."/>
            <person name="Ronning C.M."/>
            <person name="Barbazuk W.B."/>
            <person name="Blanchard M."/>
            <person name="Field C."/>
            <person name="Halling C."/>
            <person name="Hinkle G."/>
            <person name="Iartchuk O."/>
            <person name="Kim H.S."/>
            <person name="Mackenzie C."/>
            <person name="Madupu R."/>
            <person name="Miller N."/>
            <person name="Shvartsbeyn A."/>
            <person name="Sullivan S.A."/>
            <person name="Vaudin M."/>
            <person name="Wiegand R."/>
            <person name="Kaplan H.B."/>
        </authorList>
    </citation>
    <scope>NUCLEOTIDE SEQUENCE [LARGE SCALE GENOMIC DNA]</scope>
    <source>
        <strain>DK1622</strain>
    </source>
</reference>
<proteinExistence type="inferred from homology"/>